<sequence length="70" mass="8278">MSEKKQPVDLGLLEEDDEFEEFPAEDWAGLDEDEDAHVWEDNWDDDNVEDDFSNQLRAELEKHGYKMETS</sequence>
<keyword id="KW-0539">Nucleus</keyword>
<keyword id="KW-0647">Proteasome</keyword>
<keyword id="KW-1185">Reference proteome</keyword>
<evidence type="ECO:0000250" key="1">
    <source>
        <dbReference type="UniProtKB" id="P60896"/>
    </source>
</evidence>
<evidence type="ECO:0000305" key="2"/>
<organism>
    <name type="scientific">Mus musculus</name>
    <name type="common">Mouse</name>
    <dbReference type="NCBI Taxonomy" id="10090"/>
    <lineage>
        <taxon>Eukaryota</taxon>
        <taxon>Metazoa</taxon>
        <taxon>Chordata</taxon>
        <taxon>Craniata</taxon>
        <taxon>Vertebrata</taxon>
        <taxon>Euteleostomi</taxon>
        <taxon>Mammalia</taxon>
        <taxon>Eutheria</taxon>
        <taxon>Euarchontoglires</taxon>
        <taxon>Glires</taxon>
        <taxon>Rodentia</taxon>
        <taxon>Myomorpha</taxon>
        <taxon>Muroidea</taxon>
        <taxon>Muridae</taxon>
        <taxon>Murinae</taxon>
        <taxon>Mus</taxon>
        <taxon>Mus</taxon>
    </lineage>
</organism>
<reference key="1">
    <citation type="journal article" date="1996" name="Hum. Mol. Genet.">
        <title>Characterization of the split hand/split foot malformation locus SHFM1 at 7q21.3-q22.1 and analysis of a candidate gene for its expression during limb development.</title>
        <authorList>
            <person name="Crackower M.A."/>
            <person name="Scherer S.W."/>
            <person name="Rommens J.M."/>
            <person name="Hui C.-C."/>
            <person name="Poorkaj P."/>
            <person name="Soder S."/>
            <person name="Cobben J.M."/>
            <person name="Hudgins L."/>
            <person name="Evans J.P."/>
            <person name="Tsui L.-C."/>
        </authorList>
    </citation>
    <scope>NUCLEOTIDE SEQUENCE [MRNA]</scope>
</reference>
<reference key="2">
    <citation type="journal article" date="2004" name="Genome Res.">
        <title>The status, quality, and expansion of the NIH full-length cDNA project: the Mammalian Gene Collection (MGC).</title>
        <authorList>
            <consortium name="The MGC Project Team"/>
        </authorList>
    </citation>
    <scope>NUCLEOTIDE SEQUENCE [LARGE SCALE MRNA]</scope>
    <source>
        <strain>C57BL/6J</strain>
        <tissue>Brain</tissue>
        <tissue>Mammary tumor</tissue>
    </source>
</reference>
<protein>
    <recommendedName>
        <fullName>26S proteasome complex subunit SEM1</fullName>
    </recommendedName>
    <alternativeName>
        <fullName>26S proteasome complex subunit DSS1</fullName>
    </alternativeName>
    <alternativeName>
        <fullName>Deleted in split hand/split foot protein 1 homolog</fullName>
    </alternativeName>
    <alternativeName>
        <fullName>Split hand/foot deleted protein 1 homolog</fullName>
    </alternativeName>
    <alternativeName>
        <fullName>Split hand/foot malformation type 1 protein homolog</fullName>
    </alternativeName>
</protein>
<gene>
    <name type="primary">Sem1</name>
    <name type="synonym">Dss1</name>
    <name type="synonym">Shfdg1</name>
    <name type="synonym">Shfm1</name>
</gene>
<proteinExistence type="inferred from homology"/>
<comment type="function">
    <text evidence="1">Component of the 26S proteasome, a multiprotein complex involved in the ATP-dependent degradation of ubiquitinated proteins. This complex plays a key role in the maintenance of protein homeostasis by removing misfolded or damaged proteins, which could impair cellular functions, and by removing proteins whose functions are no longer required. Therefore, the proteasome participates in numerous cellular processes, including cell cycle progression, apoptosis, or DNA damage repair. Component of the TREX-2 complex (transcription and export complex 2), composed of at least ENY2, GANP, PCID2, SEM1, and either centrin CETN2 or CETN3. The TREX-2 complex functions in docking export-competent ribonucleoprotein particles (mRNPs) to the nuclear entrance of the nuclear pore complex (nuclear basket). TREX-2 participates in mRNA export and accurate chromatin positioning in the nucleus by tethering genes to the nuclear periphery. Binds and stabilizes BRCA2 and is thus involved in the control of R-loop-associated DNA damage and thus transcription-associated genomic instability. R-loop accumulation increases in SEM1-depleted cells.</text>
</comment>
<comment type="subunit">
    <text evidence="1">Component of the 19S proteasome regulatory particle complex. The 26S proteasome consists of a 20S core particle (CP) and two 19S regulatory subunits (RP). The regulatory particle is made of a lid composed of 9 subunits including SEM1, a base containing 6 ATPases and few additional components. Belongs to the TREX-2 complex (transcription and export complex 2), composed of at least ENY2, GANP, PCID2, SEM1, and either centrin CETN2 or CETN3. Component of the homologous recombination repair (HR) complex composed of ERCC5/XPG, BRCA2, PALB2, DSS1 and RAD51 (By similarity). Interacts with the C-terminal of BRCA2.</text>
</comment>
<comment type="subcellular location">
    <subcellularLocation>
        <location evidence="1">Nucleus</location>
    </subcellularLocation>
</comment>
<comment type="similarity">
    <text evidence="2">Belongs to the DSS1/SEM1 family.</text>
</comment>
<accession>P60897</accession>
<accession>Q13437</accession>
<accession>Q61067</accession>
<name>SEM1_MOUSE</name>
<dbReference type="EMBL" id="U41626">
    <property type="protein sequence ID" value="AAA91180.1"/>
    <property type="molecule type" value="mRNA"/>
</dbReference>
<dbReference type="EMBL" id="BC023490">
    <property type="protein sequence ID" value="AAH23490.1"/>
    <property type="molecule type" value="mRNA"/>
</dbReference>
<dbReference type="EMBL" id="BC058117">
    <property type="protein sequence ID" value="AAH58117.1"/>
    <property type="molecule type" value="mRNA"/>
</dbReference>
<dbReference type="CCDS" id="CCDS39422.1"/>
<dbReference type="RefSeq" id="NP_033195.1">
    <property type="nucleotide sequence ID" value="NM_009169.2"/>
</dbReference>
<dbReference type="SMR" id="P60897"/>
<dbReference type="BioGRID" id="203219">
    <property type="interactions" value="1"/>
</dbReference>
<dbReference type="FunCoup" id="P60897">
    <property type="interactions" value="267"/>
</dbReference>
<dbReference type="STRING" id="10090.ENSMUSP00000040741"/>
<dbReference type="PhosphoSitePlus" id="P60897"/>
<dbReference type="PaxDb" id="10090-ENSMUSP00000040741"/>
<dbReference type="PeptideAtlas" id="P60897"/>
<dbReference type="DNASU" id="20422"/>
<dbReference type="Ensembl" id="ENSMUST00000041111.10">
    <property type="protein sequence ID" value="ENSMUSP00000040741.9"/>
    <property type="gene ID" value="ENSMUSG00000042541.11"/>
</dbReference>
<dbReference type="GeneID" id="20422"/>
<dbReference type="KEGG" id="mmu:20422"/>
<dbReference type="UCSC" id="uc009aws.1">
    <property type="organism name" value="mouse"/>
</dbReference>
<dbReference type="AGR" id="MGI:109238"/>
<dbReference type="CTD" id="7979"/>
<dbReference type="MGI" id="MGI:109238">
    <property type="gene designation" value="Sem1"/>
</dbReference>
<dbReference type="VEuPathDB" id="HostDB:ENSMUSG00000042541"/>
<dbReference type="eggNOG" id="KOG4764">
    <property type="taxonomic scope" value="Eukaryota"/>
</dbReference>
<dbReference type="GeneTree" id="ENSGT00940000162732"/>
<dbReference type="HOGENOM" id="CLU_141774_1_2_1"/>
<dbReference type="InParanoid" id="P60897"/>
<dbReference type="OMA" id="TLWENNW"/>
<dbReference type="PhylomeDB" id="P60897"/>
<dbReference type="TreeFam" id="TF314699"/>
<dbReference type="BioGRID-ORCS" id="20422">
    <property type="hits" value="27 hits in 118 CRISPR screens"/>
</dbReference>
<dbReference type="ChiTaRS" id="Sem1">
    <property type="organism name" value="mouse"/>
</dbReference>
<dbReference type="PRO" id="PR:P60897"/>
<dbReference type="Proteomes" id="UP000000589">
    <property type="component" value="Chromosome 6"/>
</dbReference>
<dbReference type="RNAct" id="P60897">
    <property type="molecule type" value="protein"/>
</dbReference>
<dbReference type="Bgee" id="ENSMUSG00000042541">
    <property type="expression patterns" value="Expressed in urogenital fold and 283 other cell types or tissues"/>
</dbReference>
<dbReference type="ExpressionAtlas" id="P60897">
    <property type="expression patterns" value="baseline and differential"/>
</dbReference>
<dbReference type="GO" id="GO:0032039">
    <property type="term" value="C:integrator complex"/>
    <property type="evidence" value="ECO:0007669"/>
    <property type="project" value="Ensembl"/>
</dbReference>
<dbReference type="GO" id="GO:0000502">
    <property type="term" value="C:proteasome complex"/>
    <property type="evidence" value="ECO:0000250"/>
    <property type="project" value="UniProtKB"/>
</dbReference>
<dbReference type="GO" id="GO:0008541">
    <property type="term" value="C:proteasome regulatory particle, lid subcomplex"/>
    <property type="evidence" value="ECO:0007669"/>
    <property type="project" value="InterPro"/>
</dbReference>
<dbReference type="GO" id="GO:0000724">
    <property type="term" value="P:double-strand break repair via homologous recombination"/>
    <property type="evidence" value="ECO:0000315"/>
    <property type="project" value="MGI"/>
</dbReference>
<dbReference type="GO" id="GO:0006406">
    <property type="term" value="P:mRNA export from nucleus"/>
    <property type="evidence" value="ECO:0007669"/>
    <property type="project" value="InterPro"/>
</dbReference>
<dbReference type="GO" id="GO:0043248">
    <property type="term" value="P:proteasome assembly"/>
    <property type="evidence" value="ECO:0007669"/>
    <property type="project" value="InterPro"/>
</dbReference>
<dbReference type="CDD" id="cd13768">
    <property type="entry name" value="DSS1_Sem1"/>
    <property type="match status" value="1"/>
</dbReference>
<dbReference type="InterPro" id="IPR007834">
    <property type="entry name" value="DSS1_SEM1"/>
</dbReference>
<dbReference type="PANTHER" id="PTHR16771">
    <property type="entry name" value="26 PROTEASOME COMPLEX SUBUNIT DSS1"/>
    <property type="match status" value="1"/>
</dbReference>
<dbReference type="PANTHER" id="PTHR16771:SF0">
    <property type="entry name" value="26S PROTEASOME COMPLEX SUBUNIT SEM1"/>
    <property type="match status" value="1"/>
</dbReference>
<dbReference type="Pfam" id="PF05160">
    <property type="entry name" value="DSS1_SEM1"/>
    <property type="match status" value="1"/>
</dbReference>
<dbReference type="SMART" id="SM01385">
    <property type="entry name" value="DSS1_SEM1"/>
    <property type="match status" value="1"/>
</dbReference>
<feature type="chain" id="PRO_0000122962" description="26S proteasome complex subunit SEM1">
    <location>
        <begin position="1"/>
        <end position="70"/>
    </location>
</feature>